<accession>P68737</accession>
<accession>Q9L9I3</accession>
<name>NFI_SALTI</name>
<keyword id="KW-0963">Cytoplasm</keyword>
<keyword id="KW-0227">DNA damage</keyword>
<keyword id="KW-0234">DNA repair</keyword>
<keyword id="KW-0255">Endonuclease</keyword>
<keyword id="KW-0378">Hydrolase</keyword>
<keyword id="KW-0460">Magnesium</keyword>
<keyword id="KW-0479">Metal-binding</keyword>
<keyword id="KW-0540">Nuclease</keyword>
<feature type="chain" id="PRO_0000159669" description="Endonuclease V">
    <location>
        <begin position="1"/>
        <end position="223"/>
    </location>
</feature>
<feature type="binding site" evidence="1">
    <location>
        <position position="35"/>
    </location>
    <ligand>
        <name>Mg(2+)</name>
        <dbReference type="ChEBI" id="CHEBI:18420"/>
    </ligand>
</feature>
<feature type="binding site" evidence="1">
    <location>
        <position position="103"/>
    </location>
    <ligand>
        <name>Mg(2+)</name>
        <dbReference type="ChEBI" id="CHEBI:18420"/>
    </ligand>
</feature>
<feature type="site" description="Interaction with target DNA" evidence="1">
    <location>
        <position position="73"/>
    </location>
</feature>
<proteinExistence type="inferred from homology"/>
<dbReference type="EC" id="3.1.21.7" evidence="1"/>
<dbReference type="EMBL" id="AL513382">
    <property type="protein sequence ID" value="CAD09476.1"/>
    <property type="molecule type" value="Genomic_DNA"/>
</dbReference>
<dbReference type="EMBL" id="AE014613">
    <property type="protein sequence ID" value="AAO70979.1"/>
    <property type="molecule type" value="Genomic_DNA"/>
</dbReference>
<dbReference type="RefSeq" id="NP_457906.1">
    <property type="nucleotide sequence ID" value="NC_003198.1"/>
</dbReference>
<dbReference type="RefSeq" id="WP_000362359.1">
    <property type="nucleotide sequence ID" value="NZ_WSUR01000043.1"/>
</dbReference>
<dbReference type="SMR" id="P68737"/>
<dbReference type="STRING" id="220341.gene:17587577"/>
<dbReference type="KEGG" id="stt:t3463"/>
<dbReference type="KEGG" id="sty:STY3717"/>
<dbReference type="PATRIC" id="fig|220341.7.peg.3789"/>
<dbReference type="eggNOG" id="COG1515">
    <property type="taxonomic scope" value="Bacteria"/>
</dbReference>
<dbReference type="HOGENOM" id="CLU_047631_1_0_6"/>
<dbReference type="OMA" id="NACAHTL"/>
<dbReference type="OrthoDB" id="9790916at2"/>
<dbReference type="Proteomes" id="UP000000541">
    <property type="component" value="Chromosome"/>
</dbReference>
<dbReference type="Proteomes" id="UP000002670">
    <property type="component" value="Chromosome"/>
</dbReference>
<dbReference type="GO" id="GO:0005737">
    <property type="term" value="C:cytoplasm"/>
    <property type="evidence" value="ECO:0007669"/>
    <property type="project" value="UniProtKB-SubCell"/>
</dbReference>
<dbReference type="GO" id="GO:0043737">
    <property type="term" value="F:deoxyribonuclease V activity"/>
    <property type="evidence" value="ECO:0007669"/>
    <property type="project" value="UniProtKB-UniRule"/>
</dbReference>
<dbReference type="GO" id="GO:0000287">
    <property type="term" value="F:magnesium ion binding"/>
    <property type="evidence" value="ECO:0007669"/>
    <property type="project" value="UniProtKB-UniRule"/>
</dbReference>
<dbReference type="GO" id="GO:0016891">
    <property type="term" value="F:RNA endonuclease activity, producing 5'-phosphomonoesters"/>
    <property type="evidence" value="ECO:0007669"/>
    <property type="project" value="TreeGrafter"/>
</dbReference>
<dbReference type="GO" id="GO:0003727">
    <property type="term" value="F:single-stranded RNA binding"/>
    <property type="evidence" value="ECO:0007669"/>
    <property type="project" value="TreeGrafter"/>
</dbReference>
<dbReference type="GO" id="GO:0006281">
    <property type="term" value="P:DNA repair"/>
    <property type="evidence" value="ECO:0007669"/>
    <property type="project" value="UniProtKB-UniRule"/>
</dbReference>
<dbReference type="CDD" id="cd06559">
    <property type="entry name" value="Endonuclease_V"/>
    <property type="match status" value="1"/>
</dbReference>
<dbReference type="FunFam" id="3.30.2170.10:FF:000001">
    <property type="entry name" value="Endonuclease V"/>
    <property type="match status" value="1"/>
</dbReference>
<dbReference type="Gene3D" id="3.30.2170.10">
    <property type="entry name" value="archaeoglobus fulgidus dsm 4304 superfamily"/>
    <property type="match status" value="1"/>
</dbReference>
<dbReference type="HAMAP" id="MF_00801">
    <property type="entry name" value="Endonuclease_5"/>
    <property type="match status" value="1"/>
</dbReference>
<dbReference type="InterPro" id="IPR007581">
    <property type="entry name" value="Endonuclease-V"/>
</dbReference>
<dbReference type="NCBIfam" id="NF008629">
    <property type="entry name" value="PRK11617.1"/>
    <property type="match status" value="1"/>
</dbReference>
<dbReference type="PANTHER" id="PTHR28511">
    <property type="entry name" value="ENDONUCLEASE V"/>
    <property type="match status" value="1"/>
</dbReference>
<dbReference type="PANTHER" id="PTHR28511:SF1">
    <property type="entry name" value="ENDONUCLEASE V"/>
    <property type="match status" value="1"/>
</dbReference>
<dbReference type="Pfam" id="PF04493">
    <property type="entry name" value="Endonuclease_5"/>
    <property type="match status" value="1"/>
</dbReference>
<comment type="function">
    <text evidence="1">DNA repair enzyme involved in the repair of deaminated bases. Selectively cleaves double-stranded DNA at the second phosphodiester bond 3' to a deoxyinosine leaving behind the intact lesion on the nicked DNA.</text>
</comment>
<comment type="catalytic activity">
    <reaction evidence="1">
        <text>Endonucleolytic cleavage at apurinic or apyrimidinic sites to products with a 5'-phosphate.</text>
        <dbReference type="EC" id="3.1.21.7"/>
    </reaction>
</comment>
<comment type="cofactor">
    <cofactor evidence="1">
        <name>Mg(2+)</name>
        <dbReference type="ChEBI" id="CHEBI:18420"/>
    </cofactor>
</comment>
<comment type="subcellular location">
    <subcellularLocation>
        <location evidence="1">Cytoplasm</location>
    </subcellularLocation>
</comment>
<comment type="similarity">
    <text evidence="1">Belongs to the endonuclease V family.</text>
</comment>
<reference key="1">
    <citation type="journal article" date="2001" name="Nature">
        <title>Complete genome sequence of a multiple drug resistant Salmonella enterica serovar Typhi CT18.</title>
        <authorList>
            <person name="Parkhill J."/>
            <person name="Dougan G."/>
            <person name="James K.D."/>
            <person name="Thomson N.R."/>
            <person name="Pickard D."/>
            <person name="Wain J."/>
            <person name="Churcher C.M."/>
            <person name="Mungall K.L."/>
            <person name="Bentley S.D."/>
            <person name="Holden M.T.G."/>
            <person name="Sebaihia M."/>
            <person name="Baker S."/>
            <person name="Basham D."/>
            <person name="Brooks K."/>
            <person name="Chillingworth T."/>
            <person name="Connerton P."/>
            <person name="Cronin A."/>
            <person name="Davis P."/>
            <person name="Davies R.M."/>
            <person name="Dowd L."/>
            <person name="White N."/>
            <person name="Farrar J."/>
            <person name="Feltwell T."/>
            <person name="Hamlin N."/>
            <person name="Haque A."/>
            <person name="Hien T.T."/>
            <person name="Holroyd S."/>
            <person name="Jagels K."/>
            <person name="Krogh A."/>
            <person name="Larsen T.S."/>
            <person name="Leather S."/>
            <person name="Moule S."/>
            <person name="O'Gaora P."/>
            <person name="Parry C."/>
            <person name="Quail M.A."/>
            <person name="Rutherford K.M."/>
            <person name="Simmonds M."/>
            <person name="Skelton J."/>
            <person name="Stevens K."/>
            <person name="Whitehead S."/>
            <person name="Barrell B.G."/>
        </authorList>
    </citation>
    <scope>NUCLEOTIDE SEQUENCE [LARGE SCALE GENOMIC DNA]</scope>
    <source>
        <strain>CT18</strain>
    </source>
</reference>
<reference key="2">
    <citation type="journal article" date="2003" name="J. Bacteriol.">
        <title>Comparative genomics of Salmonella enterica serovar Typhi strains Ty2 and CT18.</title>
        <authorList>
            <person name="Deng W."/>
            <person name="Liou S.-R."/>
            <person name="Plunkett G. III"/>
            <person name="Mayhew G.F."/>
            <person name="Rose D.J."/>
            <person name="Burland V."/>
            <person name="Kodoyianni V."/>
            <person name="Schwartz D.C."/>
            <person name="Blattner F.R."/>
        </authorList>
    </citation>
    <scope>NUCLEOTIDE SEQUENCE [LARGE SCALE GENOMIC DNA]</scope>
    <source>
        <strain>ATCC 700931 / Ty2</strain>
    </source>
</reference>
<evidence type="ECO:0000255" key="1">
    <source>
        <dbReference type="HAMAP-Rule" id="MF_00801"/>
    </source>
</evidence>
<protein>
    <recommendedName>
        <fullName evidence="1">Endonuclease V</fullName>
        <ecNumber evidence="1">3.1.21.7</ecNumber>
    </recommendedName>
    <alternativeName>
        <fullName evidence="1">Deoxyinosine 3'endonuclease</fullName>
    </alternativeName>
    <alternativeName>
        <fullName evidence="1">Deoxyribonuclease V</fullName>
        <shortName evidence="1">DNase V</shortName>
    </alternativeName>
</protein>
<organism>
    <name type="scientific">Salmonella typhi</name>
    <dbReference type="NCBI Taxonomy" id="90370"/>
    <lineage>
        <taxon>Bacteria</taxon>
        <taxon>Pseudomonadati</taxon>
        <taxon>Pseudomonadota</taxon>
        <taxon>Gammaproteobacteria</taxon>
        <taxon>Enterobacterales</taxon>
        <taxon>Enterobacteriaceae</taxon>
        <taxon>Salmonella</taxon>
    </lineage>
</organism>
<gene>
    <name evidence="1" type="primary">nfi</name>
    <name type="ordered locus">STY3717</name>
    <name type="ordered locus">t3463</name>
</gene>
<sequence length="223" mass="24746">MDLASLRAQQIELASSVCREDRLDKDPPAFIGGADVGFEQGGEVTRAAMVLLKYPSLELVEYKVARIATTMPYIPGFLSFREYPALLAAWEQLSQKPDLLFVDGHGISHPRRLGVASHFGLLVDVPTIGVAKKRLCGKFEPLSAEPGALSPLMDKGEQLAWVWRSKARCNPLFIATGHRVSTDSALAWVQRCMKGYRLPEPTRWADAVASGRPAFVRWQEIQR</sequence>